<accession>P56280</accession>
<feature type="chain" id="PRO_0000184489" description="T-cell leukemia/lymphoma protein 1A">
    <location>
        <begin position="1"/>
        <end position="116"/>
    </location>
</feature>
<feature type="strand" evidence="4">
    <location>
        <begin position="16"/>
        <end position="20"/>
    </location>
</feature>
<feature type="strand" evidence="4">
    <location>
        <begin position="22"/>
        <end position="24"/>
    </location>
</feature>
<feature type="strand" evidence="4">
    <location>
        <begin position="26"/>
        <end position="28"/>
    </location>
</feature>
<feature type="strand" evidence="4">
    <location>
        <begin position="33"/>
        <end position="40"/>
    </location>
</feature>
<feature type="strand" evidence="4">
    <location>
        <begin position="42"/>
        <end position="44"/>
    </location>
</feature>
<feature type="strand" evidence="4">
    <location>
        <begin position="46"/>
        <end position="51"/>
    </location>
</feature>
<feature type="turn" evidence="4">
    <location>
        <begin position="63"/>
        <end position="65"/>
    </location>
</feature>
<feature type="strand" evidence="4">
    <location>
        <begin position="74"/>
        <end position="76"/>
    </location>
</feature>
<feature type="strand" evidence="4">
    <location>
        <begin position="82"/>
        <end position="84"/>
    </location>
</feature>
<feature type="strand" evidence="4">
    <location>
        <begin position="89"/>
        <end position="94"/>
    </location>
</feature>
<feature type="strand" evidence="4">
    <location>
        <begin position="96"/>
        <end position="100"/>
    </location>
</feature>
<feature type="strand" evidence="4">
    <location>
        <begin position="102"/>
        <end position="107"/>
    </location>
</feature>
<name>TCL1A_MOUSE</name>
<comment type="function">
    <text evidence="1">Enhances the phosphorylation and activation of AKT1 and AKT2. Enhances cell proliferation, stabilizes mitochondrial membrane potential and promotes cell survival (By similarity).</text>
</comment>
<comment type="subunit">
    <text evidence="1">Homodimer. Interacts with AKT1, AKT2 and AKT3 (via PH domain). Interacts with PNPT1; the interaction has no effect on PNPT1 exonuclease activity (By similarity).</text>
</comment>
<comment type="subcellular location">
    <subcellularLocation>
        <location evidence="2">Cytoplasm</location>
    </subcellularLocation>
    <subcellularLocation>
        <location evidence="2">Nucleus</location>
    </subcellularLocation>
    <subcellularLocation>
        <location evidence="1">Microsome</location>
    </subcellularLocation>
    <subcellularLocation>
        <location evidence="1">Endoplasmic reticulum</location>
    </subcellularLocation>
    <text evidence="1">Microsomal fraction.</text>
</comment>
<comment type="similarity">
    <text evidence="3">Belongs to the TCL1 family.</text>
</comment>
<evidence type="ECO:0000250" key="1"/>
<evidence type="ECO:0000269" key="2">
    <source>
    </source>
</evidence>
<evidence type="ECO:0000305" key="3"/>
<evidence type="ECO:0007829" key="4">
    <source>
        <dbReference type="PDB" id="1JNP"/>
    </source>
</evidence>
<protein>
    <recommendedName>
        <fullName>T-cell leukemia/lymphoma protein 1A</fullName>
    </recommendedName>
    <alternativeName>
        <fullName>Oncogene TCL-1</fullName>
        <shortName>Oncogene TCL1</shortName>
    </alternativeName>
    <alternativeName>
        <fullName>Protein p14 TCL1</fullName>
    </alternativeName>
</protein>
<organism>
    <name type="scientific">Mus musculus</name>
    <name type="common">Mouse</name>
    <dbReference type="NCBI Taxonomy" id="10090"/>
    <lineage>
        <taxon>Eukaryota</taxon>
        <taxon>Metazoa</taxon>
        <taxon>Chordata</taxon>
        <taxon>Craniata</taxon>
        <taxon>Vertebrata</taxon>
        <taxon>Euteleostomi</taxon>
        <taxon>Mammalia</taxon>
        <taxon>Eutheria</taxon>
        <taxon>Euarchontoglires</taxon>
        <taxon>Glires</taxon>
        <taxon>Rodentia</taxon>
        <taxon>Myomorpha</taxon>
        <taxon>Muroidea</taxon>
        <taxon>Muridae</taxon>
        <taxon>Murinae</taxon>
        <taxon>Mus</taxon>
        <taxon>Mus</taxon>
    </lineage>
</organism>
<proteinExistence type="evidence at protein level"/>
<keyword id="KW-0002">3D-structure</keyword>
<keyword id="KW-0963">Cytoplasm</keyword>
<keyword id="KW-0256">Endoplasmic reticulum</keyword>
<keyword id="KW-0492">Microsome</keyword>
<keyword id="KW-0539">Nucleus</keyword>
<keyword id="KW-1185">Reference proteome</keyword>
<dbReference type="EMBL" id="AF031956">
    <property type="protein sequence ID" value="AAB87461.1"/>
    <property type="molecule type" value="mRNA"/>
</dbReference>
<dbReference type="EMBL" id="Y15376">
    <property type="protein sequence ID" value="CAA75599.1"/>
    <property type="molecule type" value="mRNA"/>
</dbReference>
<dbReference type="EMBL" id="BC052336">
    <property type="protein sequence ID" value="AAH52336.1"/>
    <property type="molecule type" value="mRNA"/>
</dbReference>
<dbReference type="CCDS" id="CCDS36549.1"/>
<dbReference type="RefSeq" id="NP_033363.1">
    <property type="nucleotide sequence ID" value="NM_009337.3"/>
</dbReference>
<dbReference type="PDB" id="1JNP">
    <property type="method" value="X-ray"/>
    <property type="resolution" value="2.50 A"/>
    <property type="chains" value="A/B=1-116"/>
</dbReference>
<dbReference type="PDBsum" id="1JNP"/>
<dbReference type="SMR" id="P56280"/>
<dbReference type="BioGRID" id="204023">
    <property type="interactions" value="1"/>
</dbReference>
<dbReference type="FunCoup" id="P56280">
    <property type="interactions" value="447"/>
</dbReference>
<dbReference type="STRING" id="10090.ENSMUSP00000098632"/>
<dbReference type="iPTMnet" id="P56280"/>
<dbReference type="PhosphoSitePlus" id="P56280"/>
<dbReference type="REPRODUCTION-2DPAGE" id="P56280"/>
<dbReference type="PaxDb" id="10090-ENSMUSP00000036066"/>
<dbReference type="Antibodypedia" id="65">
    <property type="antibodies" value="445 antibodies from 39 providers"/>
</dbReference>
<dbReference type="DNASU" id="21432"/>
<dbReference type="Ensembl" id="ENSMUST00000041316.15">
    <property type="protein sequence ID" value="ENSMUSP00000036066.9"/>
    <property type="gene ID" value="ENSMUSG00000041359.15"/>
</dbReference>
<dbReference type="GeneID" id="21432"/>
<dbReference type="KEGG" id="mmu:21432"/>
<dbReference type="UCSC" id="uc007oyd.2">
    <property type="organism name" value="mouse"/>
</dbReference>
<dbReference type="AGR" id="MGI:1097166"/>
<dbReference type="CTD" id="21432"/>
<dbReference type="MGI" id="MGI:1097166">
    <property type="gene designation" value="Tcl1"/>
</dbReference>
<dbReference type="VEuPathDB" id="HostDB:ENSMUSG00000041359"/>
<dbReference type="eggNOG" id="ENOG502TDVJ">
    <property type="taxonomic scope" value="Eukaryota"/>
</dbReference>
<dbReference type="GeneTree" id="ENSGT00390000006885"/>
<dbReference type="HOGENOM" id="CLU_168379_0_1_1"/>
<dbReference type="InParanoid" id="P56280"/>
<dbReference type="OMA" id="LYHIKFR"/>
<dbReference type="OrthoDB" id="9834674at2759"/>
<dbReference type="PhylomeDB" id="P56280"/>
<dbReference type="TreeFam" id="TF337903"/>
<dbReference type="BioGRID-ORCS" id="21432">
    <property type="hits" value="2 hits in 78 CRISPR screens"/>
</dbReference>
<dbReference type="ChiTaRS" id="Tcl1">
    <property type="organism name" value="mouse"/>
</dbReference>
<dbReference type="EvolutionaryTrace" id="P56280"/>
<dbReference type="PRO" id="PR:P56280"/>
<dbReference type="Proteomes" id="UP000000589">
    <property type="component" value="Chromosome 12"/>
</dbReference>
<dbReference type="RNAct" id="P56280">
    <property type="molecule type" value="protein"/>
</dbReference>
<dbReference type="Bgee" id="ENSMUSG00000041359">
    <property type="expression patterns" value="Expressed in animal zygote and 18 other cell types or tissues"/>
</dbReference>
<dbReference type="ExpressionAtlas" id="P56280">
    <property type="expression patterns" value="baseline and differential"/>
</dbReference>
<dbReference type="GO" id="GO:0005938">
    <property type="term" value="C:cell cortex"/>
    <property type="evidence" value="ECO:0000314"/>
    <property type="project" value="MGI"/>
</dbReference>
<dbReference type="GO" id="GO:0005783">
    <property type="term" value="C:endoplasmic reticulum"/>
    <property type="evidence" value="ECO:0007669"/>
    <property type="project" value="UniProtKB-SubCell"/>
</dbReference>
<dbReference type="GO" id="GO:0005634">
    <property type="term" value="C:nucleus"/>
    <property type="evidence" value="ECO:0000314"/>
    <property type="project" value="MGI"/>
</dbReference>
<dbReference type="GO" id="GO:1990917">
    <property type="term" value="C:ooplasm"/>
    <property type="evidence" value="ECO:0000314"/>
    <property type="project" value="MGI"/>
</dbReference>
<dbReference type="GO" id="GO:0045120">
    <property type="term" value="C:pronucleus"/>
    <property type="evidence" value="ECO:0000314"/>
    <property type="project" value="MGI"/>
</dbReference>
<dbReference type="GO" id="GO:0043539">
    <property type="term" value="F:protein serine/threonine kinase activator activity"/>
    <property type="evidence" value="ECO:0007669"/>
    <property type="project" value="InterPro"/>
</dbReference>
<dbReference type="GO" id="GO:0032148">
    <property type="term" value="P:activation of protein kinase B activity"/>
    <property type="evidence" value="ECO:0000315"/>
    <property type="project" value="CACAO"/>
</dbReference>
<dbReference type="GO" id="GO:0010629">
    <property type="term" value="P:negative regulation of gene expression"/>
    <property type="evidence" value="ECO:0000315"/>
    <property type="project" value="MGI"/>
</dbReference>
<dbReference type="GO" id="GO:2000036">
    <property type="term" value="P:regulation of stem cell population maintenance"/>
    <property type="evidence" value="ECO:0000316"/>
    <property type="project" value="MGI"/>
</dbReference>
<dbReference type="GO" id="GO:0035019">
    <property type="term" value="P:somatic stem cell population maintenance"/>
    <property type="evidence" value="ECO:0000315"/>
    <property type="project" value="MGI"/>
</dbReference>
<dbReference type="FunFam" id="2.40.15.10:FF:000002">
    <property type="entry name" value="T-cell leukemia/lymphoma protein 1A"/>
    <property type="match status" value="1"/>
</dbReference>
<dbReference type="Gene3D" id="2.40.15.10">
    <property type="entry name" value="TCL1/MTCP1"/>
    <property type="match status" value="1"/>
</dbReference>
<dbReference type="InterPro" id="IPR004832">
    <property type="entry name" value="TCL1_MTCP1"/>
</dbReference>
<dbReference type="InterPro" id="IPR036672">
    <property type="entry name" value="TCL1_MTCP1_sf"/>
</dbReference>
<dbReference type="PANTHER" id="PTHR14060">
    <property type="entry name" value="PROTEIN P13 MTCP-1"/>
    <property type="match status" value="1"/>
</dbReference>
<dbReference type="PANTHER" id="PTHR14060:SF4">
    <property type="entry name" value="T-CELL LEUKEMIA_LYMPHOMA PROTEIN 1A"/>
    <property type="match status" value="1"/>
</dbReference>
<dbReference type="Pfam" id="PF01840">
    <property type="entry name" value="TCL1_MTCP1"/>
    <property type="match status" value="1"/>
</dbReference>
<dbReference type="SUPFAM" id="SSF50904">
    <property type="entry name" value="Oncogene products"/>
    <property type="match status" value="1"/>
</dbReference>
<sequence>MATQRAHRAETPAHPNRLWIWEKHVYLDEFRRSWLPVVIKSNEKFQVILRQEDVTLGEAMSPSQLVPYELPLMWQLYPKDRYRSCDSMYWQILYHIKFRDVEDMLLELIDSESNDE</sequence>
<reference key="1">
    <citation type="journal article" date="1997" name="Oncogene">
        <title>The murine Tcl1 oncogene: embryonic and lymphoid cell expression.</title>
        <authorList>
            <person name="Narducci M.G."/>
            <person name="Virgilio L."/>
            <person name="Engiles J.B."/>
            <person name="Buchberg A.M."/>
            <person name="Billips L."/>
            <person name="Facchiano A."/>
            <person name="Croce C.M."/>
            <person name="Russo G."/>
            <person name="Rothstein J.L."/>
        </authorList>
    </citation>
    <scope>NUCLEOTIDE SEQUENCE [MRNA]</scope>
</reference>
<reference key="2">
    <citation type="journal article" date="2004" name="Genome Res.">
        <title>The status, quality, and expansion of the NIH full-length cDNA project: the Mammalian Gene Collection (MGC).</title>
        <authorList>
            <consortium name="The MGC Project Team"/>
        </authorList>
    </citation>
    <scope>NUCLEOTIDE SEQUENCE [LARGE SCALE MRNA]</scope>
    <source>
        <strain>C57BL/6J</strain>
        <tissue>Egg</tissue>
    </source>
</reference>
<reference key="3">
    <citation type="journal article" date="2000" name="Proc. Natl. Acad. Sci. U.S.A.">
        <title>Tcl1 enhances Akt kinase activity and mediates its nuclear translocation.</title>
        <authorList>
            <person name="Pekarsky Y."/>
            <person name="Koval A."/>
            <person name="Hallas C."/>
            <person name="Bichi R."/>
            <person name="Tresini M."/>
            <person name="Malstrom S."/>
            <person name="Russo G."/>
            <person name="Tsichlis P."/>
            <person name="Croce C.M."/>
        </authorList>
    </citation>
    <scope>SUBCELLULAR LOCATION</scope>
</reference>
<reference key="4">
    <citation type="journal article" date="2001" name="Acta Crystallogr. D">
        <title>Structure of murine Tcl1 at 2.5 A resolution and implications for the TCL oncogene family.</title>
        <authorList>
            <person name="Petock J.M."/>
            <person name="Torshin I.Y."/>
            <person name="Wang Y.-F."/>
            <person name="Du Bois G.C."/>
            <person name="Croce C.M."/>
            <person name="Harrison R.W."/>
            <person name="Weber I.T."/>
        </authorList>
    </citation>
    <scope>X-RAY CRYSTALLOGRAPHY (2.5 ANGSTROMS)</scope>
</reference>
<gene>
    <name type="primary">Tcl1a</name>
    <name type="synonym">Tcl1</name>
</gene>